<gene>
    <name evidence="6" type="primary">CHS1</name>
    <name type="ORF">PHYSODRAFT_557500</name>
</gene>
<dbReference type="EC" id="2.4.1.16" evidence="5"/>
<dbReference type="EMBL" id="JH159153">
    <property type="protein sequence ID" value="EGZ21442.1"/>
    <property type="molecule type" value="Genomic_DNA"/>
</dbReference>
<dbReference type="RefSeq" id="XP_009524159.1">
    <property type="nucleotide sequence ID" value="XM_009525864.1"/>
</dbReference>
<dbReference type="PDB" id="7WJM">
    <property type="method" value="EM"/>
    <property type="resolution" value="3.30 A"/>
    <property type="chains" value="A/B=1-913"/>
</dbReference>
<dbReference type="PDB" id="7WJN">
    <property type="method" value="EM"/>
    <property type="resolution" value="3.30 A"/>
    <property type="chains" value="A/B=1-913"/>
</dbReference>
<dbReference type="PDB" id="7WJO">
    <property type="method" value="EM"/>
    <property type="resolution" value="3.20 A"/>
    <property type="chains" value="A/B=1-913"/>
</dbReference>
<dbReference type="PDB" id="7X05">
    <property type="method" value="EM"/>
    <property type="resolution" value="3.90 A"/>
    <property type="chains" value="A/B=1-913"/>
</dbReference>
<dbReference type="PDB" id="7X06">
    <property type="method" value="EM"/>
    <property type="resolution" value="3.10 A"/>
    <property type="chains" value="A/B=1-913"/>
</dbReference>
<dbReference type="PDB" id="8K52">
    <property type="method" value="EM"/>
    <property type="resolution" value="2.94 A"/>
    <property type="chains" value="A/B=1-913"/>
</dbReference>
<dbReference type="PDB" id="8Z0O">
    <property type="method" value="EM"/>
    <property type="resolution" value="3.20 A"/>
    <property type="chains" value="A/B=1-913"/>
</dbReference>
<dbReference type="PDBsum" id="7WJM"/>
<dbReference type="PDBsum" id="7WJN"/>
<dbReference type="PDBsum" id="7WJO"/>
<dbReference type="PDBsum" id="7X05"/>
<dbReference type="PDBsum" id="7X06"/>
<dbReference type="PDBsum" id="8K52"/>
<dbReference type="PDBsum" id="8Z0O"/>
<dbReference type="EMDB" id="EMD-32545"/>
<dbReference type="EMDB" id="EMD-32546"/>
<dbReference type="EMDB" id="EMD-32547"/>
<dbReference type="EMDB" id="EMD-32917"/>
<dbReference type="EMDB" id="EMD-32918"/>
<dbReference type="EMDB" id="EMD-36893"/>
<dbReference type="EMDB" id="EMD-39709"/>
<dbReference type="SMR" id="G4Z2L3"/>
<dbReference type="STRING" id="1094619.G4Z2L3"/>
<dbReference type="EnsemblProtists" id="EGZ21442">
    <property type="protein sequence ID" value="EGZ21442"/>
    <property type="gene ID" value="PHYSODRAFT_557500"/>
</dbReference>
<dbReference type="GeneID" id="20663244"/>
<dbReference type="KEGG" id="psoj:PHYSODRAFT_557500"/>
<dbReference type="InParanoid" id="G4Z2L3"/>
<dbReference type="OMA" id="AWILHYV"/>
<dbReference type="Proteomes" id="UP000002640">
    <property type="component" value="Unassembled WGS sequence"/>
</dbReference>
<dbReference type="GO" id="GO:0005886">
    <property type="term" value="C:plasma membrane"/>
    <property type="evidence" value="ECO:0007669"/>
    <property type="project" value="UniProtKB-SubCell"/>
</dbReference>
<dbReference type="GO" id="GO:0004100">
    <property type="term" value="F:chitin synthase activity"/>
    <property type="evidence" value="ECO:0007669"/>
    <property type="project" value="UniProtKB-EC"/>
</dbReference>
<dbReference type="GO" id="GO:0071555">
    <property type="term" value="P:cell wall organization"/>
    <property type="evidence" value="ECO:0007669"/>
    <property type="project" value="UniProtKB-KW"/>
</dbReference>
<dbReference type="GO" id="GO:0006031">
    <property type="term" value="P:chitin biosynthetic process"/>
    <property type="evidence" value="ECO:0007669"/>
    <property type="project" value="InterPro"/>
</dbReference>
<dbReference type="Gene3D" id="1.20.58.80">
    <property type="entry name" value="Phosphotransferase system, lactose/cellobiose-type IIA subunit"/>
    <property type="match status" value="1"/>
</dbReference>
<dbReference type="InterPro" id="IPR004835">
    <property type="entry name" value="Chitin_synth"/>
</dbReference>
<dbReference type="InterPro" id="IPR004834">
    <property type="entry name" value="Chitin_synth_fun"/>
</dbReference>
<dbReference type="InterPro" id="IPR029044">
    <property type="entry name" value="Nucleotide-diphossugar_trans"/>
</dbReference>
<dbReference type="PANTHER" id="PTHR22914">
    <property type="entry name" value="CHITIN SYNTHASE"/>
    <property type="match status" value="1"/>
</dbReference>
<dbReference type="PANTHER" id="PTHR22914:SF9">
    <property type="entry name" value="CHITIN SYNTHASE 1"/>
    <property type="match status" value="1"/>
</dbReference>
<dbReference type="Pfam" id="PF01644">
    <property type="entry name" value="Chitin_synth_1"/>
    <property type="match status" value="1"/>
</dbReference>
<dbReference type="SUPFAM" id="SSF53448">
    <property type="entry name" value="Nucleotide-diphospho-sugar transferases"/>
    <property type="match status" value="1"/>
</dbReference>
<accession>G4Z2L3</accession>
<reference key="1">
    <citation type="journal article" date="2006" name="Science">
        <title>Phytophthora genome sequences uncover evolutionary origins and mechanisms of pathogenesis.</title>
        <authorList>
            <person name="Tyler B.M."/>
            <person name="Tripathy S."/>
            <person name="Zhang X."/>
            <person name="Dehal P."/>
            <person name="Jiang R.H.Y."/>
            <person name="Aerts A."/>
            <person name="Arredondo F.D."/>
            <person name="Baxter L."/>
            <person name="Bensasson D."/>
            <person name="Beynon J.L."/>
            <person name="Chapman J."/>
            <person name="Damasceno C.M.B."/>
            <person name="Dorrance A.E."/>
            <person name="Dou D."/>
            <person name="Dickerman A.W."/>
            <person name="Dubchak I.L."/>
            <person name="Garbelotto M."/>
            <person name="Gijzen M."/>
            <person name="Gordon S.G."/>
            <person name="Govers F."/>
            <person name="Grunwald N.J."/>
            <person name="Huang W."/>
            <person name="Ivors K.L."/>
            <person name="Jones R.W."/>
            <person name="Kamoun S."/>
            <person name="Krampis K."/>
            <person name="Lamour K.H."/>
            <person name="Lee M.-K."/>
            <person name="McDonald W.H."/>
            <person name="Medina M."/>
            <person name="Meijer H.J.G."/>
            <person name="Nordberg E.K."/>
            <person name="Maclean D.J."/>
            <person name="Ospina-Giraldo M.D."/>
            <person name="Morris P.F."/>
            <person name="Phuntumart V."/>
            <person name="Putnam N.H."/>
            <person name="Rash S."/>
            <person name="Rose J.K.C."/>
            <person name="Sakihama Y."/>
            <person name="Salamov A.A."/>
            <person name="Savidor A."/>
            <person name="Scheuring C.F."/>
            <person name="Smith B.M."/>
            <person name="Sobral B.W.S."/>
            <person name="Terry A."/>
            <person name="Torto-Alalibo T.A."/>
            <person name="Win J."/>
            <person name="Xu Z."/>
            <person name="Zhang H."/>
            <person name="Grigoriev I.V."/>
            <person name="Rokhsar D.S."/>
            <person name="Boore J.L."/>
        </authorList>
    </citation>
    <scope>NUCLEOTIDE SEQUENCE [LARGE SCALE GENOMIC DNA]</scope>
    <source>
        <strain>P6497</strain>
    </source>
</reference>
<reference key="2">
    <citation type="journal article" date="2019" name="Environ. Microbiol.">
        <title>Chitin synthase is involved in vegetative growth, asexual reproduction and pathogenesis of Phytophthora capsici and Phytophthora sojae.</title>
        <authorList>
            <person name="Cheng W."/>
            <person name="Lin M."/>
            <person name="Qiu M."/>
            <person name="Kong L."/>
            <person name="Xu Y."/>
            <person name="Li Y."/>
            <person name="Wang Y."/>
            <person name="Ye W."/>
            <person name="Dong S."/>
            <person name="He S."/>
            <person name="Wang Y."/>
        </authorList>
    </citation>
    <scope>FUNCTION</scope>
    <scope>DISRUPTION PHENOTYPE</scope>
    <scope>INDUCTION</scope>
</reference>
<reference evidence="8 9 10 11 12" key="3">
    <citation type="journal article" date="2022" name="Nature">
        <title>Structural basis for directional chitin biosynthesis.</title>
        <authorList>
            <person name="Chen W."/>
            <person name="Cao P."/>
            <person name="Liu Y."/>
            <person name="Yu A."/>
            <person name="Wang D."/>
            <person name="Chen L."/>
            <person name="Sundarraj R."/>
            <person name="Yuchi Z."/>
            <person name="Gong Y."/>
            <person name="Merzendorfer H."/>
            <person name="Yang Q."/>
        </authorList>
    </citation>
    <scope>STRUCTURE BY ELECTRON MICROSCOPY (3.10 ANGSTROMS) IN COMPLEX WITH UDP-N-ACETYL-ALPHA-D-GLUCOSAMINE</scope>
    <scope>FUNCTION</scope>
    <scope>CATALYTIC ACTIVITY</scope>
    <scope>DOMAIN</scope>
    <scope>ACTIVE SITE</scope>
    <scope>MUTAGENESIS OF ASP-291; LEU-359; ASP-382; GLU-432; TYR-433; VAL-452; PRO-454; GLU-495; ASP-496; ARG-536; TRP-539 AND TRP-742</scope>
    <scope>SUBUNIT</scope>
    <scope>ACTIVITY REGULATION</scope>
    <scope>COFACTOR</scope>
</reference>
<feature type="chain" id="PRO_0000460881" description="Chitin synthase 1">
    <location>
        <begin position="1"/>
        <end position="913"/>
    </location>
</feature>
<feature type="transmembrane region" description="Helical" evidence="1">
    <location>
        <begin position="539"/>
        <end position="559"/>
    </location>
</feature>
<feature type="transmembrane region" description="Helical" evidence="1">
    <location>
        <begin position="581"/>
        <end position="601"/>
    </location>
</feature>
<feature type="transmembrane region" description="Helical" evidence="1">
    <location>
        <begin position="625"/>
        <end position="645"/>
    </location>
</feature>
<feature type="transmembrane region" description="Helical" evidence="1">
    <location>
        <begin position="658"/>
        <end position="678"/>
    </location>
</feature>
<feature type="transmembrane region" description="Helical" evidence="1">
    <location>
        <begin position="684"/>
        <end position="704"/>
    </location>
</feature>
<feature type="transmembrane region" description="Helical" evidence="1">
    <location>
        <begin position="711"/>
        <end position="731"/>
    </location>
</feature>
<feature type="transmembrane region" description="Helical" evidence="1">
    <location>
        <begin position="800"/>
        <end position="820"/>
    </location>
</feature>
<feature type="transmembrane region" description="Helical" evidence="1">
    <location>
        <begin position="825"/>
        <end position="845"/>
    </location>
</feature>
<feature type="region of interest" description="Disordered" evidence="3">
    <location>
        <begin position="1"/>
        <end position="27"/>
    </location>
</feature>
<feature type="short sequence motif" description="Conserved SWG motif" evidence="5">
    <location>
        <begin position="741"/>
        <end position="743"/>
    </location>
</feature>
<feature type="active site" evidence="5">
    <location>
        <position position="496"/>
    </location>
</feature>
<feature type="binding site" evidence="5 9">
    <location>
        <position position="237"/>
    </location>
    <ligand>
        <name>UDP-N-acetyl-alpha-D-glucosamine</name>
        <dbReference type="ChEBI" id="CHEBI:57705"/>
    </ligand>
</feature>
<feature type="binding site" evidence="5 9">
    <location>
        <position position="241"/>
    </location>
    <ligand>
        <name>UDP-N-acetyl-alpha-D-glucosamine</name>
        <dbReference type="ChEBI" id="CHEBI:57705"/>
    </ligand>
</feature>
<feature type="binding site" evidence="5 9">
    <location>
        <position position="291"/>
    </location>
    <ligand>
        <name>UDP-N-acetyl-alpha-D-glucosamine</name>
        <dbReference type="ChEBI" id="CHEBI:57705"/>
    </ligand>
</feature>
<feature type="glycosylation site" description="N-linked (GlcNAc...) asparagine" evidence="2">
    <location>
        <position position="420"/>
    </location>
</feature>
<feature type="glycosylation site" description="N-linked (GlcNAc...) asparagine" evidence="2">
    <location>
        <position position="510"/>
    </location>
</feature>
<feature type="glycosylation site" description="N-linked (GlcNAc...) asparagine" evidence="2">
    <location>
        <position position="867"/>
    </location>
</feature>
<feature type="glycosylation site" description="N-linked (GlcNAc...) asparagine" evidence="2">
    <location>
        <position position="900"/>
    </location>
</feature>
<feature type="mutagenesis site" description="Abolishes the catalytic activity." evidence="5">
    <original>D</original>
    <variation>A</variation>
    <location>
        <position position="291"/>
    </location>
</feature>
<feature type="mutagenesis site" description="Leads to 70% loss of activity." evidence="5">
    <original>L</original>
    <variation>A</variation>
    <location>
        <position position="359"/>
    </location>
</feature>
<feature type="mutagenesis site" description="Abolishes the catalytic activity." evidence="5">
    <original>D</original>
    <variation>A</variation>
    <location>
        <position position="382"/>
    </location>
</feature>
<feature type="mutagenesis site" description="Greatly impairs the catalytic activity." evidence="5">
    <original>E</original>
    <variation>A</variation>
    <location>
        <position position="432"/>
    </location>
</feature>
<feature type="mutagenesis site" description="Greatly impairs the catalytic activity." evidence="5">
    <original>Y</original>
    <variation>A</variation>
    <location>
        <position position="433"/>
    </location>
</feature>
<feature type="mutagenesis site" description="Greatly impairs the catalytic activity." evidence="5">
    <original>V</original>
    <variation>A</variation>
    <location>
        <position position="452"/>
    </location>
</feature>
<feature type="mutagenesis site" description="Greatly impairs the catalytic activity." evidence="5">
    <original>P</original>
    <variation>A</variation>
    <location>
        <position position="454"/>
    </location>
</feature>
<feature type="mutagenesis site" description="Leads to 95% loss of activity." evidence="5">
    <original>E</original>
    <variation>A</variation>
    <location>
        <position position="495"/>
    </location>
</feature>
<feature type="mutagenesis site" description="Abolishes the catalytic activity." evidence="5">
    <original>D</original>
    <variation>A</variation>
    <location>
        <position position="496"/>
    </location>
</feature>
<feature type="mutagenesis site" description="Strongly reduces the catalytic activity." evidence="5">
    <original>D</original>
    <variation>N</variation>
    <location>
        <position position="496"/>
    </location>
</feature>
<feature type="mutagenesis site" description="Greatly impairs the catalytic activity." evidence="5">
    <original>R</original>
    <variation>A</variation>
    <location>
        <position position="536"/>
    </location>
</feature>
<feature type="mutagenesis site" description="Greatly impairs the catalytic activity." evidence="5">
    <original>W</original>
    <variation>A</variation>
    <location>
        <position position="539"/>
    </location>
</feature>
<feature type="mutagenesis site" description="Abolishes the catalytic activity." evidence="5">
    <original>W</original>
    <variation>A</variation>
    <location>
        <position position="742"/>
    </location>
</feature>
<feature type="helix" evidence="15">
    <location>
        <begin position="24"/>
        <end position="36"/>
    </location>
</feature>
<feature type="strand" evidence="14">
    <location>
        <begin position="45"/>
        <end position="56"/>
    </location>
</feature>
<feature type="helix" evidence="14">
    <location>
        <begin position="68"/>
        <end position="73"/>
    </location>
</feature>
<feature type="helix" evidence="15">
    <location>
        <begin position="78"/>
        <end position="86"/>
    </location>
</feature>
<feature type="helix" evidence="15">
    <location>
        <begin position="94"/>
        <end position="109"/>
    </location>
</feature>
<feature type="helix" evidence="15">
    <location>
        <begin position="113"/>
        <end position="133"/>
    </location>
</feature>
<feature type="helix" evidence="15">
    <location>
        <begin position="137"/>
        <end position="162"/>
    </location>
</feature>
<feature type="strand" evidence="13">
    <location>
        <begin position="163"/>
        <end position="165"/>
    </location>
</feature>
<feature type="strand" evidence="15">
    <location>
        <begin position="177"/>
        <end position="180"/>
    </location>
</feature>
<feature type="helix" evidence="15">
    <location>
        <begin position="195"/>
        <end position="199"/>
    </location>
</feature>
<feature type="strand" evidence="15">
    <location>
        <begin position="200"/>
        <end position="206"/>
    </location>
</feature>
<feature type="helix" evidence="15">
    <location>
        <begin position="211"/>
        <end position="213"/>
    </location>
</feature>
<feature type="turn" evidence="15">
    <location>
        <begin position="214"/>
        <end position="218"/>
    </location>
</feature>
<feature type="helix" evidence="15">
    <location>
        <begin position="222"/>
        <end position="226"/>
    </location>
</feature>
<feature type="strand" evidence="15">
    <location>
        <begin position="232"/>
        <end position="240"/>
    </location>
</feature>
<feature type="helix" evidence="15">
    <location>
        <begin position="243"/>
        <end position="261"/>
    </location>
</feature>
<feature type="strand" evidence="15">
    <location>
        <begin position="268"/>
        <end position="270"/>
    </location>
</feature>
<feature type="strand" evidence="14">
    <location>
        <begin position="276"/>
        <end position="279"/>
    </location>
</feature>
<feature type="helix" evidence="15">
    <location>
        <begin position="281"/>
        <end position="283"/>
    </location>
</feature>
<feature type="strand" evidence="15">
    <location>
        <begin position="284"/>
        <end position="291"/>
    </location>
</feature>
<feature type="turn" evidence="15">
    <location>
        <begin position="293"/>
        <end position="295"/>
    </location>
</feature>
<feature type="helix" evidence="15">
    <location>
        <begin position="298"/>
        <end position="306"/>
    </location>
</feature>
<feature type="helix" evidence="15">
    <location>
        <begin position="312"/>
        <end position="318"/>
    </location>
</feature>
<feature type="strand" evidence="15">
    <location>
        <begin position="320"/>
        <end position="322"/>
    </location>
</feature>
<feature type="strand" evidence="15">
    <location>
        <begin position="325"/>
        <end position="331"/>
    </location>
</feature>
<feature type="strand" evidence="15">
    <location>
        <begin position="346"/>
        <end position="354"/>
    </location>
</feature>
<feature type="helix" evidence="15">
    <location>
        <begin position="358"/>
        <end position="373"/>
    </location>
</feature>
<feature type="strand" evidence="15">
    <location>
        <begin position="376"/>
        <end position="384"/>
    </location>
</feature>
<feature type="helix" evidence="15">
    <location>
        <begin position="391"/>
        <end position="402"/>
    </location>
</feature>
<feature type="strand" evidence="15">
    <location>
        <begin position="405"/>
        <end position="420"/>
    </location>
</feature>
<feature type="helix" evidence="15">
    <location>
        <begin position="424"/>
        <end position="446"/>
    </location>
</feature>
<feature type="strand" evidence="14">
    <location>
        <begin position="454"/>
        <end position="456"/>
    </location>
</feature>
<feature type="strand" evidence="15">
    <location>
        <begin position="458"/>
        <end position="461"/>
    </location>
</feature>
<feature type="strand" evidence="13">
    <location>
        <begin position="464"/>
        <end position="467"/>
    </location>
</feature>
<feature type="helix" evidence="15">
    <location>
        <begin position="468"/>
        <end position="478"/>
    </location>
</feature>
<feature type="helix" evidence="15">
    <location>
        <begin position="481"/>
        <end position="484"/>
    </location>
</feature>
<feature type="helix" evidence="15">
    <location>
        <begin position="486"/>
        <end position="492"/>
    </location>
</feature>
<feature type="helix" evidence="15">
    <location>
        <begin position="496"/>
        <end position="504"/>
    </location>
</feature>
<feature type="strand" evidence="15">
    <location>
        <begin position="512"/>
        <end position="523"/>
    </location>
</feature>
<feature type="helix" evidence="15">
    <location>
        <begin position="529"/>
        <end position="553"/>
    </location>
</feature>
<feature type="helix" evidence="15">
    <location>
        <begin position="555"/>
        <end position="559"/>
    </location>
</feature>
<feature type="helix" evidence="15">
    <location>
        <begin position="565"/>
        <end position="586"/>
    </location>
</feature>
<feature type="helix" evidence="15">
    <location>
        <begin position="588"/>
        <end position="605"/>
    </location>
</feature>
<feature type="strand" evidence="14">
    <location>
        <begin position="610"/>
        <end position="612"/>
    </location>
</feature>
<feature type="strand" evidence="15">
    <location>
        <begin position="615"/>
        <end position="617"/>
    </location>
</feature>
<feature type="helix" evidence="15">
    <location>
        <begin position="620"/>
        <end position="645"/>
    </location>
</feature>
<feature type="turn" evidence="15">
    <location>
        <begin position="649"/>
        <end position="652"/>
    </location>
</feature>
<feature type="helix" evidence="15">
    <location>
        <begin position="653"/>
        <end position="680"/>
    </location>
</feature>
<feature type="helix" evidence="15">
    <location>
        <begin position="685"/>
        <end position="695"/>
    </location>
</feature>
<feature type="helix" evidence="15">
    <location>
        <begin position="697"/>
        <end position="705"/>
    </location>
</feature>
<feature type="helix" evidence="15">
    <location>
        <begin position="709"/>
        <end position="734"/>
    </location>
</feature>
<feature type="helix" evidence="14">
    <location>
        <begin position="736"/>
        <end position="738"/>
    </location>
</feature>
<feature type="helix" evidence="15">
    <location>
        <begin position="765"/>
        <end position="818"/>
    </location>
</feature>
<feature type="helix" evidence="15">
    <location>
        <begin position="821"/>
        <end position="852"/>
    </location>
</feature>
<feature type="turn" evidence="15">
    <location>
        <begin position="853"/>
        <end position="856"/>
    </location>
</feature>
<feature type="turn" evidence="14">
    <location>
        <begin position="857"/>
        <end position="859"/>
    </location>
</feature>
<name>CHS1_PHYSP</name>
<proteinExistence type="evidence at protein level"/>
<organism>
    <name type="scientific">Phytophthora sojae (strain P6497)</name>
    <name type="common">Soybean stem and root rot agent</name>
    <name type="synonym">Phytophthora megasperma f. sp. glycines</name>
    <dbReference type="NCBI Taxonomy" id="1094619"/>
    <lineage>
        <taxon>Eukaryota</taxon>
        <taxon>Sar</taxon>
        <taxon>Stramenopiles</taxon>
        <taxon>Oomycota</taxon>
        <taxon>Peronosporales</taxon>
        <taxon>Peronosporaceae</taxon>
        <taxon>Phytophthora</taxon>
    </lineage>
</organism>
<evidence type="ECO:0000255" key="1"/>
<evidence type="ECO:0000255" key="2">
    <source>
        <dbReference type="PROSITE-ProRule" id="PRU00498"/>
    </source>
</evidence>
<evidence type="ECO:0000256" key="3">
    <source>
        <dbReference type="SAM" id="MobiDB-lite"/>
    </source>
</evidence>
<evidence type="ECO:0000269" key="4">
    <source>
    </source>
</evidence>
<evidence type="ECO:0000269" key="5">
    <source>
    </source>
</evidence>
<evidence type="ECO:0000303" key="6">
    <source>
    </source>
</evidence>
<evidence type="ECO:0000305" key="7"/>
<evidence type="ECO:0007744" key="8">
    <source>
        <dbReference type="PDB" id="7WJM"/>
    </source>
</evidence>
<evidence type="ECO:0007744" key="9">
    <source>
        <dbReference type="PDB" id="7WJN"/>
    </source>
</evidence>
<evidence type="ECO:0007744" key="10">
    <source>
        <dbReference type="PDB" id="7WJO"/>
    </source>
</evidence>
<evidence type="ECO:0007744" key="11">
    <source>
        <dbReference type="PDB" id="7X05"/>
    </source>
</evidence>
<evidence type="ECO:0007744" key="12">
    <source>
        <dbReference type="PDB" id="7X06"/>
    </source>
</evidence>
<evidence type="ECO:0007829" key="13">
    <source>
        <dbReference type="PDB" id="7WJN"/>
    </source>
</evidence>
<evidence type="ECO:0007829" key="14">
    <source>
        <dbReference type="PDB" id="7X06"/>
    </source>
</evidence>
<evidence type="ECO:0007829" key="15">
    <source>
        <dbReference type="PDB" id="8K52"/>
    </source>
</evidence>
<protein>
    <recommendedName>
        <fullName evidence="6">Chitin synthase 1</fullName>
        <ecNumber evidence="5">2.4.1.16</ecNumber>
    </recommendedName>
    <alternativeName>
        <fullName evidence="7">Chitin-UDP acetyl-glucosaminyl transferase 1</fullName>
    </alternativeName>
    <alternativeName>
        <fullName evidence="6">Class-II chitin synthase 1</fullName>
    </alternativeName>
</protein>
<keyword id="KW-0002">3D-structure</keyword>
<keyword id="KW-1003">Cell membrane</keyword>
<keyword id="KW-0961">Cell wall biogenesis/degradation</keyword>
<keyword id="KW-0325">Glycoprotein</keyword>
<keyword id="KW-0328">Glycosyltransferase</keyword>
<keyword id="KW-0472">Membrane</keyword>
<keyword id="KW-1185">Reference proteome</keyword>
<keyword id="KW-0808">Transferase</keyword>
<keyword id="KW-0812">Transmembrane</keyword>
<keyword id="KW-1133">Transmembrane helix</keyword>
<keyword id="KW-0843">Virulence</keyword>
<sequence>MSGAPPPSSGFAPRSYGQQPLSHAPRSSMMSVEYDGIPLPPPSIRSCGSQQYVTSYIPTGAAFPPSSVQDMISSMKSYASATDLVRTYSEIPSVEEALSTLDRAAAALNARRYRDALKLYLEGGYAMANVAERQANPKICNLLTSKGFETLNWCARLCDWIEGRIKEKHPRPGVHKVGIPVSNWDEDWVGPFMDEEEARRMWYTPVYCPHPIDFSNLGYRLRCVETGRRPRLMICITMYNEGPQQLKATLKKLANNLAYLKEQMPGDEKSLTGAFAGDDVWQNVLVCIVADGREQVHPKTLDYLEAIGLYDEDLLTINSAGIGAQCHLFEHTLQLSVNGKCLLPIQTVFALKENKASKLDSHHWYFNAFAEQIQPEYTAVMDVGTMLTKSALYHLLFAFERNHQIGGACGQLTVDNPFENLSNWVISAQHFEYKISNILDKSLESCFGFISVLPGAFSAYRYEAIRGAPLDAYFQTLNIELDVLGPFIGNMYLAEDRILSFEVVARKNCNWTMHYVKDAVARTDVPHDLVGLISQRKRWLNGAFFATLFSIWNWGRIYSESKHTFVRKMAFLVFYVYHLLYTAFGFFLPANLYLALFFIVFQGFQQNRLEFIDTSEYSQTVLDCAVYIYNFSYLFGLLMLIIIGLGNNPKHMKLTYYFVGAVFGLMMMLSSLVGAGIFFSTPATVHSIVVSILTVGVYFIASALHGEVHHIFMTFTHYTALIPSFVNIFTIYSFCNLQDLSWGTKGLHDDPLLAASLDETEKGDFKDVIAKRRALEELRREEKERVENRKKNFEAFRTNVLLTWAFSNLIFALFVVYFASSSTYMPVLYIFVASLNTCRLLGSIGHWVYIHTEGLRGRVIDKSECGNGTGRYPQNSYVQLEEHYAALAEDQRTYASGRTNASVRTVNDVSSAA</sequence>
<comment type="function">
    <text evidence="4 5">Polymerizes chitin, a structural polymer of the cell wall and septum, by transferring the sugar moiety of UDP-GlcNAc to the non-reducing end of the growing chitin polymer (PubMed:36131020). Involved in mycelial growth, sporangial production, zoospore release and pathogenesis (PubMed:31314944).</text>
</comment>
<comment type="catalytic activity">
    <reaction evidence="5">
        <text>[(1-&gt;4)-N-acetyl-beta-D-glucosaminyl](n) + UDP-N-acetyl-alpha-D-glucosamine = [(1-&gt;4)-N-acetyl-beta-D-glucosaminyl](n+1) + UDP + H(+)</text>
        <dbReference type="Rhea" id="RHEA:16637"/>
        <dbReference type="Rhea" id="RHEA-COMP:9593"/>
        <dbReference type="Rhea" id="RHEA-COMP:9595"/>
        <dbReference type="ChEBI" id="CHEBI:15378"/>
        <dbReference type="ChEBI" id="CHEBI:17029"/>
        <dbReference type="ChEBI" id="CHEBI:57705"/>
        <dbReference type="ChEBI" id="CHEBI:58223"/>
        <dbReference type="EC" id="2.4.1.16"/>
    </reaction>
    <physiologicalReaction direction="left-to-right" evidence="5">
        <dbReference type="Rhea" id="RHEA:16638"/>
    </physiologicalReaction>
</comment>
<comment type="cofactor">
    <cofactor evidence="5">
        <name>Mn(2+)</name>
        <dbReference type="ChEBI" id="CHEBI:29035"/>
    </cofactor>
</comment>
<comment type="activity regulation">
    <text evidence="5">The activity is inhibited by nikkomycin Z (NikZ).</text>
</comment>
<comment type="subunit">
    <text evidence="5">Homodimer.</text>
</comment>
<comment type="subcellular location">
    <subcellularLocation>
        <location evidence="7">Cell membrane</location>
        <topology evidence="1">Multi-pass membrane protein</topology>
    </subcellularLocation>
</comment>
<comment type="induction">
    <text evidence="4">Expression is low in the mycelium and during most infective stages except at 48 hpi, but increases in sporangia and zoospores, and peaks in germinating cysts.</text>
</comment>
<comment type="domain">
    <text evidence="5">The chitin-translocating channel is located in the transmembrane region and connects the extracellular side of the membrane with the intracellular reaction chamber. The entrance of this channel is formed by the VLPGA (residues 452-456), QHFEY (residues 429-433) and QRKRW (residues 535-539) motifs.</text>
</comment>
<comment type="domain">
    <text evidence="5">The reaction chamber includes a tub for substrate binding and a cave for synthetic reactions. The tub is formed by three previously reported motifs, TMYNE (residues 237-241), DGR (residues 291-293) and DVGT (residues 382-385), along with a newly identified KASKL motif (residues 355-359). The KASKL motif forms a wall of the tub that separates the tub from the catalytic center. The cave next to the tub is flanked by Glu-495 and the catalytic residue Asp-496 of the conserved EDR motif (residues 495-497) on one side and by Leu-359 of the KASKL motif on the other side.</text>
</comment>
<comment type="domain">
    <text evidence="5">The conserved SWG motif (residues 741-743) is located at a flexible cytoplasmic loop and might be associated with substrate entrance, as it is located close to the reaction chamber.</text>
</comment>
<comment type="disruption phenotype">
    <text evidence="4">Reduces mycelial growth rate by approximately 10% and retards sporangial production and zoospore release (PubMed:31314944). Also leads to significantly reduced virulence (PubMed:31314944).</text>
</comment>
<comment type="similarity">
    <text evidence="7">Belongs to the chitin synthase family. Class II subfamily.</text>
</comment>